<comment type="function">
    <text evidence="1">Catalyzes the phosphorylation of D-fructose 6-phosphate to fructose 1,6-bisphosphate by ATP, the first committing step of glycolysis.</text>
</comment>
<comment type="catalytic activity">
    <reaction evidence="1">
        <text>beta-D-fructose 6-phosphate + ATP = beta-D-fructose 1,6-bisphosphate + ADP + H(+)</text>
        <dbReference type="Rhea" id="RHEA:16109"/>
        <dbReference type="ChEBI" id="CHEBI:15378"/>
        <dbReference type="ChEBI" id="CHEBI:30616"/>
        <dbReference type="ChEBI" id="CHEBI:32966"/>
        <dbReference type="ChEBI" id="CHEBI:57634"/>
        <dbReference type="ChEBI" id="CHEBI:456216"/>
        <dbReference type="EC" id="2.7.1.11"/>
    </reaction>
</comment>
<comment type="cofactor">
    <cofactor evidence="1">
        <name>Mg(2+)</name>
        <dbReference type="ChEBI" id="CHEBI:18420"/>
    </cofactor>
</comment>
<comment type="activity regulation">
    <text evidence="1">Allosterically activated by ADP and other diphosphonucleosides, and allosterically inhibited by phosphoenolpyruvate.</text>
</comment>
<comment type="pathway">
    <text evidence="1">Carbohydrate degradation; glycolysis; D-glyceraldehyde 3-phosphate and glycerone phosphate from D-glucose: step 3/4.</text>
</comment>
<comment type="subunit">
    <text evidence="1">Homotetramer.</text>
</comment>
<comment type="subcellular location">
    <subcellularLocation>
        <location evidence="1">Cytoplasm</location>
    </subcellularLocation>
</comment>
<comment type="similarity">
    <text evidence="1">Belongs to the phosphofructokinase type A (PFKA) family. ATP-dependent PFK group I subfamily. Prokaryotic clade 'B1' sub-subfamily.</text>
</comment>
<comment type="sequence caution" evidence="2">
    <conflict type="erroneous initiation">
        <sequence resource="EMBL-CDS" id="AAO89897"/>
    </conflict>
</comment>
<reference key="1">
    <citation type="journal article" date="2003" name="Proc. Natl. Acad. Sci. U.S.A.">
        <title>Complete genome sequence of the Q-fever pathogen, Coxiella burnetii.</title>
        <authorList>
            <person name="Seshadri R."/>
            <person name="Paulsen I.T."/>
            <person name="Eisen J.A."/>
            <person name="Read T.D."/>
            <person name="Nelson K.E."/>
            <person name="Nelson W.C."/>
            <person name="Ward N.L."/>
            <person name="Tettelin H."/>
            <person name="Davidsen T.M."/>
            <person name="Beanan M.J."/>
            <person name="DeBoy R.T."/>
            <person name="Daugherty S.C."/>
            <person name="Brinkac L.M."/>
            <person name="Madupu R."/>
            <person name="Dodson R.J."/>
            <person name="Khouri H.M."/>
            <person name="Lee K.H."/>
            <person name="Carty H.A."/>
            <person name="Scanlan D."/>
            <person name="Heinzen R.A."/>
            <person name="Thompson H.A."/>
            <person name="Samuel J.E."/>
            <person name="Fraser C.M."/>
            <person name="Heidelberg J.F."/>
        </authorList>
    </citation>
    <scope>NUCLEOTIDE SEQUENCE [LARGE SCALE GENOMIC DNA]</scope>
    <source>
        <strain>RSA 493 / Nine Mile phase I</strain>
    </source>
</reference>
<feature type="chain" id="PRO_1000072055" description="ATP-dependent 6-phosphofructokinase">
    <location>
        <begin position="1"/>
        <end position="326"/>
    </location>
</feature>
<feature type="active site" description="Proton acceptor" evidence="1">
    <location>
        <position position="131"/>
    </location>
</feature>
<feature type="binding site" evidence="1">
    <location>
        <position position="14"/>
    </location>
    <ligand>
        <name>ATP</name>
        <dbReference type="ChEBI" id="CHEBI:30616"/>
    </ligand>
</feature>
<feature type="binding site" evidence="1">
    <location>
        <begin position="24"/>
        <end position="28"/>
    </location>
    <ligand>
        <name>ADP</name>
        <dbReference type="ChEBI" id="CHEBI:456216"/>
        <note>allosteric activator; ligand shared between dimeric partners</note>
    </ligand>
</feature>
<feature type="binding site" evidence="1">
    <location>
        <begin position="75"/>
        <end position="76"/>
    </location>
    <ligand>
        <name>ATP</name>
        <dbReference type="ChEBI" id="CHEBI:30616"/>
    </ligand>
</feature>
<feature type="binding site" evidence="1">
    <location>
        <begin position="105"/>
        <end position="108"/>
    </location>
    <ligand>
        <name>ATP</name>
        <dbReference type="ChEBI" id="CHEBI:30616"/>
    </ligand>
</feature>
<feature type="binding site" evidence="1">
    <location>
        <position position="106"/>
    </location>
    <ligand>
        <name>Mg(2+)</name>
        <dbReference type="ChEBI" id="CHEBI:18420"/>
        <note>catalytic</note>
    </ligand>
</feature>
<feature type="binding site" description="in other chain" evidence="1">
    <location>
        <begin position="129"/>
        <end position="131"/>
    </location>
    <ligand>
        <name>substrate</name>
        <note>ligand shared between dimeric partners</note>
    </ligand>
</feature>
<feature type="binding site" description="in other chain" evidence="1">
    <location>
        <position position="158"/>
    </location>
    <ligand>
        <name>ADP</name>
        <dbReference type="ChEBI" id="CHEBI:456216"/>
        <note>allosteric activator; ligand shared between dimeric partners</note>
    </ligand>
</feature>
<feature type="binding site" evidence="1">
    <location>
        <position position="166"/>
    </location>
    <ligand>
        <name>substrate</name>
        <note>ligand shared between dimeric partners</note>
    </ligand>
</feature>
<feature type="binding site" description="in other chain" evidence="1">
    <location>
        <begin position="173"/>
        <end position="175"/>
    </location>
    <ligand>
        <name>substrate</name>
        <note>ligand shared between dimeric partners</note>
    </ligand>
</feature>
<feature type="binding site" description="in other chain" evidence="1">
    <location>
        <begin position="189"/>
        <end position="191"/>
    </location>
    <ligand>
        <name>ADP</name>
        <dbReference type="ChEBI" id="CHEBI:456216"/>
        <note>allosteric activator; ligand shared between dimeric partners</note>
    </ligand>
</feature>
<feature type="binding site" description="in other chain" evidence="1">
    <location>
        <position position="215"/>
    </location>
    <ligand>
        <name>ADP</name>
        <dbReference type="ChEBI" id="CHEBI:456216"/>
        <note>allosteric activator; ligand shared between dimeric partners</note>
    </ligand>
</feature>
<feature type="binding site" description="in other chain" evidence="1">
    <location>
        <begin position="216"/>
        <end position="218"/>
    </location>
    <ligand>
        <name>ADP</name>
        <dbReference type="ChEBI" id="CHEBI:456216"/>
        <note>allosteric activator; ligand shared between dimeric partners</note>
    </ligand>
</feature>
<feature type="binding site" description="in other chain" evidence="1">
    <location>
        <position position="225"/>
    </location>
    <ligand>
        <name>substrate</name>
        <note>ligand shared between dimeric partners</note>
    </ligand>
</feature>
<feature type="binding site" evidence="1">
    <location>
        <position position="248"/>
    </location>
    <ligand>
        <name>substrate</name>
        <note>ligand shared between dimeric partners</note>
    </ligand>
</feature>
<feature type="binding site" description="in other chain" evidence="1">
    <location>
        <begin position="254"/>
        <end position="257"/>
    </location>
    <ligand>
        <name>substrate</name>
        <note>ligand shared between dimeric partners</note>
    </ligand>
</feature>
<sequence length="326" mass="35012">MTEIKKLIVLTSGGDAPGMNAAIRAVVRTALHYQFEVYGATAGFAGLVNGQVVPLNSRAVANCIQRGGTILKTGRFENFRFKAVRDKAREFLKKLQIDAMIVLGGNGSFAGASKLYQEGGPQMIGIPCTIDNDIQGTDYCIGFDTACNTALQAIDKIRDTAFSHERNFLIEVMGRSSGFIAVNVGIAGGAEIIALPEFHVDIDTLTQKIKKQHGKKSASIIVAAEANQPGHSFEVAKQIKEKTGIEYRVCVLGHTQRGGTPTVKDRVLASLMGAQAIEALKKGLTEKMIAYQNGKIAVAPLPDPDNGTRYFADEALLRVNNIICAM</sequence>
<organism>
    <name type="scientific">Coxiella burnetii (strain RSA 493 / Nine Mile phase I)</name>
    <dbReference type="NCBI Taxonomy" id="227377"/>
    <lineage>
        <taxon>Bacteria</taxon>
        <taxon>Pseudomonadati</taxon>
        <taxon>Pseudomonadota</taxon>
        <taxon>Gammaproteobacteria</taxon>
        <taxon>Legionellales</taxon>
        <taxon>Coxiellaceae</taxon>
        <taxon>Coxiella</taxon>
    </lineage>
</organism>
<protein>
    <recommendedName>
        <fullName evidence="1">ATP-dependent 6-phosphofructokinase</fullName>
        <shortName evidence="1">ATP-PFK</shortName>
        <shortName evidence="1">Phosphofructokinase</shortName>
        <ecNumber evidence="1">2.7.1.11</ecNumber>
    </recommendedName>
    <alternativeName>
        <fullName evidence="1">Phosphohexokinase</fullName>
    </alternativeName>
</protein>
<evidence type="ECO:0000255" key="1">
    <source>
        <dbReference type="HAMAP-Rule" id="MF_00339"/>
    </source>
</evidence>
<evidence type="ECO:0000305" key="2"/>
<proteinExistence type="inferred from homology"/>
<keyword id="KW-0021">Allosteric enzyme</keyword>
<keyword id="KW-0067">ATP-binding</keyword>
<keyword id="KW-0963">Cytoplasm</keyword>
<keyword id="KW-0324">Glycolysis</keyword>
<keyword id="KW-0418">Kinase</keyword>
<keyword id="KW-0460">Magnesium</keyword>
<keyword id="KW-0479">Metal-binding</keyword>
<keyword id="KW-0547">Nucleotide-binding</keyword>
<keyword id="KW-1185">Reference proteome</keyword>
<keyword id="KW-0808">Transferase</keyword>
<gene>
    <name evidence="1" type="primary">pfkA</name>
    <name type="ordered locus">CBU_0341</name>
</gene>
<dbReference type="EC" id="2.7.1.11" evidence="1"/>
<dbReference type="EMBL" id="AE016828">
    <property type="protein sequence ID" value="AAO89897.2"/>
    <property type="status" value="ALT_INIT"/>
    <property type="molecule type" value="Genomic_DNA"/>
</dbReference>
<dbReference type="RefSeq" id="NP_819383.2">
    <property type="nucleotide sequence ID" value="NC_002971.3"/>
</dbReference>
<dbReference type="SMR" id="Q83EH9"/>
<dbReference type="STRING" id="227377.CBU_0341"/>
<dbReference type="EnsemblBacteria" id="AAO89897">
    <property type="protein sequence ID" value="AAO89897"/>
    <property type="gene ID" value="CBU_0341"/>
</dbReference>
<dbReference type="GeneID" id="1208223"/>
<dbReference type="KEGG" id="cbu:CBU_0341"/>
<dbReference type="PATRIC" id="fig|227377.7.peg.335"/>
<dbReference type="eggNOG" id="COG0205">
    <property type="taxonomic scope" value="Bacteria"/>
</dbReference>
<dbReference type="HOGENOM" id="CLU_020655_0_1_6"/>
<dbReference type="OrthoDB" id="9802503at2"/>
<dbReference type="UniPathway" id="UPA00109">
    <property type="reaction ID" value="UER00182"/>
</dbReference>
<dbReference type="Proteomes" id="UP000002671">
    <property type="component" value="Chromosome"/>
</dbReference>
<dbReference type="GO" id="GO:0005945">
    <property type="term" value="C:6-phosphofructokinase complex"/>
    <property type="evidence" value="ECO:0000318"/>
    <property type="project" value="GO_Central"/>
</dbReference>
<dbReference type="GO" id="GO:0003872">
    <property type="term" value="F:6-phosphofructokinase activity"/>
    <property type="evidence" value="ECO:0000318"/>
    <property type="project" value="GO_Central"/>
</dbReference>
<dbReference type="GO" id="GO:0005524">
    <property type="term" value="F:ATP binding"/>
    <property type="evidence" value="ECO:0007669"/>
    <property type="project" value="UniProtKB-KW"/>
</dbReference>
<dbReference type="GO" id="GO:0070095">
    <property type="term" value="F:fructose-6-phosphate binding"/>
    <property type="evidence" value="ECO:0000318"/>
    <property type="project" value="GO_Central"/>
</dbReference>
<dbReference type="GO" id="GO:0046872">
    <property type="term" value="F:metal ion binding"/>
    <property type="evidence" value="ECO:0007669"/>
    <property type="project" value="UniProtKB-KW"/>
</dbReference>
<dbReference type="GO" id="GO:0061621">
    <property type="term" value="P:canonical glycolysis"/>
    <property type="evidence" value="ECO:0000318"/>
    <property type="project" value="GO_Central"/>
</dbReference>
<dbReference type="GO" id="GO:0030388">
    <property type="term" value="P:fructose 1,6-bisphosphate metabolic process"/>
    <property type="evidence" value="ECO:0000318"/>
    <property type="project" value="GO_Central"/>
</dbReference>
<dbReference type="GO" id="GO:0006002">
    <property type="term" value="P:fructose 6-phosphate metabolic process"/>
    <property type="evidence" value="ECO:0000318"/>
    <property type="project" value="GO_Central"/>
</dbReference>
<dbReference type="FunFam" id="3.40.50.450:FF:000001">
    <property type="entry name" value="ATP-dependent 6-phosphofructokinase"/>
    <property type="match status" value="1"/>
</dbReference>
<dbReference type="FunFam" id="3.40.50.460:FF:000002">
    <property type="entry name" value="ATP-dependent 6-phosphofructokinase"/>
    <property type="match status" value="1"/>
</dbReference>
<dbReference type="Gene3D" id="3.40.50.450">
    <property type="match status" value="1"/>
</dbReference>
<dbReference type="Gene3D" id="3.40.50.460">
    <property type="entry name" value="Phosphofructokinase domain"/>
    <property type="match status" value="1"/>
</dbReference>
<dbReference type="HAMAP" id="MF_00339">
    <property type="entry name" value="Phosphofructokinase_I_B1"/>
    <property type="match status" value="1"/>
</dbReference>
<dbReference type="InterPro" id="IPR022953">
    <property type="entry name" value="ATP_PFK"/>
</dbReference>
<dbReference type="InterPro" id="IPR012003">
    <property type="entry name" value="ATP_PFK_prok-type"/>
</dbReference>
<dbReference type="InterPro" id="IPR012828">
    <property type="entry name" value="PFKA_ATP_prok"/>
</dbReference>
<dbReference type="InterPro" id="IPR015912">
    <property type="entry name" value="Phosphofructokinase_CS"/>
</dbReference>
<dbReference type="InterPro" id="IPR000023">
    <property type="entry name" value="Phosphofructokinase_dom"/>
</dbReference>
<dbReference type="InterPro" id="IPR035966">
    <property type="entry name" value="PKF_sf"/>
</dbReference>
<dbReference type="NCBIfam" id="TIGR02482">
    <property type="entry name" value="PFKA_ATP"/>
    <property type="match status" value="1"/>
</dbReference>
<dbReference type="NCBIfam" id="NF002872">
    <property type="entry name" value="PRK03202.1"/>
    <property type="match status" value="1"/>
</dbReference>
<dbReference type="PANTHER" id="PTHR13697:SF4">
    <property type="entry name" value="ATP-DEPENDENT 6-PHOSPHOFRUCTOKINASE"/>
    <property type="match status" value="1"/>
</dbReference>
<dbReference type="PANTHER" id="PTHR13697">
    <property type="entry name" value="PHOSPHOFRUCTOKINASE"/>
    <property type="match status" value="1"/>
</dbReference>
<dbReference type="Pfam" id="PF00365">
    <property type="entry name" value="PFK"/>
    <property type="match status" value="1"/>
</dbReference>
<dbReference type="PIRSF" id="PIRSF000532">
    <property type="entry name" value="ATP_PFK_prok"/>
    <property type="match status" value="1"/>
</dbReference>
<dbReference type="PRINTS" id="PR00476">
    <property type="entry name" value="PHFRCTKINASE"/>
</dbReference>
<dbReference type="SUPFAM" id="SSF53784">
    <property type="entry name" value="Phosphofructokinase"/>
    <property type="match status" value="1"/>
</dbReference>
<dbReference type="PROSITE" id="PS00433">
    <property type="entry name" value="PHOSPHOFRUCTOKINASE"/>
    <property type="match status" value="1"/>
</dbReference>
<accession>Q83EH9</accession>
<name>PFKA_COXBU</name>